<keyword id="KW-0687">Ribonucleoprotein</keyword>
<keyword id="KW-0689">Ribosomal protein</keyword>
<keyword id="KW-0694">RNA-binding</keyword>
<keyword id="KW-0699">rRNA-binding</keyword>
<comment type="function">
    <text evidence="1">Protein S19 forms a complex with S13 that binds strongly to the 16S ribosomal RNA.</text>
</comment>
<comment type="similarity">
    <text evidence="1">Belongs to the universal ribosomal protein uS19 family.</text>
</comment>
<proteinExistence type="inferred from homology"/>
<protein>
    <recommendedName>
        <fullName evidence="1">Small ribosomal subunit protein uS19</fullName>
    </recommendedName>
    <alternativeName>
        <fullName evidence="2">30S ribosomal protein S19</fullName>
    </alternativeName>
</protein>
<evidence type="ECO:0000255" key="1">
    <source>
        <dbReference type="HAMAP-Rule" id="MF_00531"/>
    </source>
</evidence>
<evidence type="ECO:0000305" key="2"/>
<organism>
    <name type="scientific">Burkholderia ambifaria (strain ATCC BAA-244 / DSM 16087 / CCUG 44356 / LMG 19182 / AMMD)</name>
    <name type="common">Burkholderia cepacia (strain AMMD)</name>
    <dbReference type="NCBI Taxonomy" id="339670"/>
    <lineage>
        <taxon>Bacteria</taxon>
        <taxon>Pseudomonadati</taxon>
        <taxon>Pseudomonadota</taxon>
        <taxon>Betaproteobacteria</taxon>
        <taxon>Burkholderiales</taxon>
        <taxon>Burkholderiaceae</taxon>
        <taxon>Burkholderia</taxon>
        <taxon>Burkholderia cepacia complex</taxon>
    </lineage>
</organism>
<accession>Q0BJ42</accession>
<sequence>MARSVKKGPFCDAHLLKKVEAAAASRDKKPIKTWSRRSTILPDFIGLTIAVHNGRQHVPVYISENMVGHKLGEFALTRTFKGHAADKKAKK</sequence>
<dbReference type="EMBL" id="CP000440">
    <property type="protein sequence ID" value="ABI85831.1"/>
    <property type="molecule type" value="Genomic_DNA"/>
</dbReference>
<dbReference type="RefSeq" id="WP_004199273.1">
    <property type="nucleotide sequence ID" value="NZ_CP009798.1"/>
</dbReference>
<dbReference type="SMR" id="Q0BJ42"/>
<dbReference type="GeneID" id="98107156"/>
<dbReference type="KEGG" id="bam:Bamb_0271"/>
<dbReference type="PATRIC" id="fig|339670.21.peg.1349"/>
<dbReference type="eggNOG" id="COG0185">
    <property type="taxonomic scope" value="Bacteria"/>
</dbReference>
<dbReference type="Proteomes" id="UP000000662">
    <property type="component" value="Chromosome 1"/>
</dbReference>
<dbReference type="GO" id="GO:0005737">
    <property type="term" value="C:cytoplasm"/>
    <property type="evidence" value="ECO:0007669"/>
    <property type="project" value="UniProtKB-ARBA"/>
</dbReference>
<dbReference type="GO" id="GO:0015935">
    <property type="term" value="C:small ribosomal subunit"/>
    <property type="evidence" value="ECO:0007669"/>
    <property type="project" value="InterPro"/>
</dbReference>
<dbReference type="GO" id="GO:0019843">
    <property type="term" value="F:rRNA binding"/>
    <property type="evidence" value="ECO:0007669"/>
    <property type="project" value="UniProtKB-UniRule"/>
</dbReference>
<dbReference type="GO" id="GO:0003735">
    <property type="term" value="F:structural constituent of ribosome"/>
    <property type="evidence" value="ECO:0007669"/>
    <property type="project" value="InterPro"/>
</dbReference>
<dbReference type="GO" id="GO:0000028">
    <property type="term" value="P:ribosomal small subunit assembly"/>
    <property type="evidence" value="ECO:0007669"/>
    <property type="project" value="TreeGrafter"/>
</dbReference>
<dbReference type="GO" id="GO:0006412">
    <property type="term" value="P:translation"/>
    <property type="evidence" value="ECO:0007669"/>
    <property type="project" value="UniProtKB-UniRule"/>
</dbReference>
<dbReference type="FunFam" id="3.30.860.10:FF:000001">
    <property type="entry name" value="30S ribosomal protein S19"/>
    <property type="match status" value="1"/>
</dbReference>
<dbReference type="Gene3D" id="3.30.860.10">
    <property type="entry name" value="30s Ribosomal Protein S19, Chain A"/>
    <property type="match status" value="1"/>
</dbReference>
<dbReference type="HAMAP" id="MF_00531">
    <property type="entry name" value="Ribosomal_uS19"/>
    <property type="match status" value="1"/>
</dbReference>
<dbReference type="InterPro" id="IPR002222">
    <property type="entry name" value="Ribosomal_uS19"/>
</dbReference>
<dbReference type="InterPro" id="IPR005732">
    <property type="entry name" value="Ribosomal_uS19_bac-type"/>
</dbReference>
<dbReference type="InterPro" id="IPR020934">
    <property type="entry name" value="Ribosomal_uS19_CS"/>
</dbReference>
<dbReference type="InterPro" id="IPR023575">
    <property type="entry name" value="Ribosomal_uS19_SF"/>
</dbReference>
<dbReference type="NCBIfam" id="TIGR01050">
    <property type="entry name" value="rpsS_bact"/>
    <property type="match status" value="1"/>
</dbReference>
<dbReference type="PANTHER" id="PTHR11880">
    <property type="entry name" value="RIBOSOMAL PROTEIN S19P FAMILY MEMBER"/>
    <property type="match status" value="1"/>
</dbReference>
<dbReference type="PANTHER" id="PTHR11880:SF8">
    <property type="entry name" value="SMALL RIBOSOMAL SUBUNIT PROTEIN US19M"/>
    <property type="match status" value="1"/>
</dbReference>
<dbReference type="Pfam" id="PF00203">
    <property type="entry name" value="Ribosomal_S19"/>
    <property type="match status" value="1"/>
</dbReference>
<dbReference type="PIRSF" id="PIRSF002144">
    <property type="entry name" value="Ribosomal_S19"/>
    <property type="match status" value="1"/>
</dbReference>
<dbReference type="PRINTS" id="PR00975">
    <property type="entry name" value="RIBOSOMALS19"/>
</dbReference>
<dbReference type="SUPFAM" id="SSF54570">
    <property type="entry name" value="Ribosomal protein S19"/>
    <property type="match status" value="1"/>
</dbReference>
<dbReference type="PROSITE" id="PS00323">
    <property type="entry name" value="RIBOSOMAL_S19"/>
    <property type="match status" value="1"/>
</dbReference>
<gene>
    <name evidence="1" type="primary">rpsS</name>
    <name type="ordered locus">Bamb_0271</name>
</gene>
<name>RS19_BURCM</name>
<feature type="chain" id="PRO_1000051021" description="Small ribosomal subunit protein uS19">
    <location>
        <begin position="1"/>
        <end position="91"/>
    </location>
</feature>
<reference key="1">
    <citation type="submission" date="2006-08" db="EMBL/GenBank/DDBJ databases">
        <title>Complete sequence of chromosome 1 of Burkholderia cepacia AMMD.</title>
        <authorList>
            <person name="Copeland A."/>
            <person name="Lucas S."/>
            <person name="Lapidus A."/>
            <person name="Barry K."/>
            <person name="Detter J.C."/>
            <person name="Glavina del Rio T."/>
            <person name="Hammon N."/>
            <person name="Israni S."/>
            <person name="Pitluck S."/>
            <person name="Bruce D."/>
            <person name="Chain P."/>
            <person name="Malfatti S."/>
            <person name="Shin M."/>
            <person name="Vergez L."/>
            <person name="Schmutz J."/>
            <person name="Larimer F."/>
            <person name="Land M."/>
            <person name="Hauser L."/>
            <person name="Kyrpides N."/>
            <person name="Kim E."/>
            <person name="Parke J."/>
            <person name="Coenye T."/>
            <person name="Konstantinidis K."/>
            <person name="Ramette A."/>
            <person name="Tiedje J."/>
            <person name="Richardson P."/>
        </authorList>
    </citation>
    <scope>NUCLEOTIDE SEQUENCE [LARGE SCALE GENOMIC DNA]</scope>
    <source>
        <strain>ATCC BAA-244 / DSM 16087 / CCUG 44356 / LMG 19182 / AMMD</strain>
    </source>
</reference>